<geneLocation type="non-photosynthetic plastid"/>
<evidence type="ECO:0000255" key="1">
    <source>
        <dbReference type="HAMAP-Rule" id="MF_01390"/>
    </source>
</evidence>
<dbReference type="EMBL" id="AF051981">
    <property type="protein sequence ID" value="AAF21686.1"/>
    <property type="molecule type" value="Genomic_DNA"/>
</dbReference>
<dbReference type="GO" id="GO:0009507">
    <property type="term" value="C:chloroplast"/>
    <property type="evidence" value="ECO:0007669"/>
    <property type="project" value="UniProtKB-UniRule"/>
</dbReference>
<dbReference type="GO" id="GO:0003723">
    <property type="term" value="F:RNA binding"/>
    <property type="evidence" value="ECO:0007669"/>
    <property type="project" value="UniProtKB-KW"/>
</dbReference>
<dbReference type="GO" id="GO:0006397">
    <property type="term" value="P:mRNA processing"/>
    <property type="evidence" value="ECO:0007669"/>
    <property type="project" value="UniProtKB-KW"/>
</dbReference>
<dbReference type="GO" id="GO:0008380">
    <property type="term" value="P:RNA splicing"/>
    <property type="evidence" value="ECO:0007669"/>
    <property type="project" value="UniProtKB-UniRule"/>
</dbReference>
<dbReference type="GO" id="GO:0008033">
    <property type="term" value="P:tRNA processing"/>
    <property type="evidence" value="ECO:0007669"/>
    <property type="project" value="UniProtKB-KW"/>
</dbReference>
<dbReference type="HAMAP" id="MF_01390">
    <property type="entry name" value="MatK"/>
    <property type="match status" value="1"/>
</dbReference>
<dbReference type="InterPro" id="IPR024937">
    <property type="entry name" value="Domain_X"/>
</dbReference>
<dbReference type="InterPro" id="IPR002866">
    <property type="entry name" value="Maturase_MatK"/>
</dbReference>
<dbReference type="InterPro" id="IPR024942">
    <property type="entry name" value="Maturase_MatK_N"/>
</dbReference>
<dbReference type="PANTHER" id="PTHR34811">
    <property type="entry name" value="MATURASE K"/>
    <property type="match status" value="1"/>
</dbReference>
<dbReference type="PANTHER" id="PTHR34811:SF1">
    <property type="entry name" value="MATURASE K"/>
    <property type="match status" value="1"/>
</dbReference>
<dbReference type="Pfam" id="PF01348">
    <property type="entry name" value="Intron_maturas2"/>
    <property type="match status" value="1"/>
</dbReference>
<dbReference type="Pfam" id="PF01824">
    <property type="entry name" value="MatK_N"/>
    <property type="match status" value="1"/>
</dbReference>
<protein>
    <recommendedName>
        <fullName evidence="1">Maturase K</fullName>
    </recommendedName>
    <alternativeName>
        <fullName evidence="1">Intron maturase</fullName>
    </alternativeName>
</protein>
<sequence>MEEIQRYLQLERSQQHDFLYPLIFQEYIYTFAHDRGFGRSILSENPGYDNKYSLLIVKRLITRMYQQNHLIISPNDSNQNQFLGRNKNLYSQIISEGFAFIVEIPFSLRLISCLEGKNKKIIKSQNLRSILSIFPFLEDNFSHLNLVLDILIPHPVHGEILVQTLRYWVKDASSLHLLRFFLNKNWNSLITPKKASSSFLKRNQRLFLFLYNSHVCEYESVFVFLRNQSSHLRSTPFGVFLERIYFYGKIERLVNVFVKVKDFQANLWLVKEPCIHYIRYQRKAILASKGTSLFMNKWKCYLITFWQWHFSLWFYPRRIYINQLSNHSFEFLGYQSSLRMNPSVVRSQILENSFLINNAIKKVDTFIPIIPLIVSLAKAKFCNVXGHPISKPVRADLSDSNIIDRFGCICRNFSHYHSGSSKKKSLYRIKYILRLSCARTLARKHKTTVRTFLKRLGSELLEEFLLSEEDVLFLTFPKASSSLQGVYRNRIWYLDIISINDLADHKSKL</sequence>
<organism>
    <name type="scientific">Castilleja linariifolia</name>
    <name type="common">Wyoming Indian paintbrush</name>
    <name type="synonym">Castilleja linearis</name>
    <dbReference type="NCBI Taxonomy" id="46037"/>
    <lineage>
        <taxon>Eukaryota</taxon>
        <taxon>Viridiplantae</taxon>
        <taxon>Streptophyta</taxon>
        <taxon>Embryophyta</taxon>
        <taxon>Tracheophyta</taxon>
        <taxon>Spermatophyta</taxon>
        <taxon>Magnoliopsida</taxon>
        <taxon>eudicotyledons</taxon>
        <taxon>Gunneridae</taxon>
        <taxon>Pentapetalae</taxon>
        <taxon>asterids</taxon>
        <taxon>lamiids</taxon>
        <taxon>Lamiales</taxon>
        <taxon>Orobanchaceae</taxon>
        <taxon>Pedicularideae</taxon>
        <taxon>Castillejinae</taxon>
        <taxon>Castilleja</taxon>
    </lineage>
</organism>
<proteinExistence type="inferred from homology"/>
<keyword id="KW-0507">mRNA processing</keyword>
<keyword id="KW-0934">Plastid</keyword>
<keyword id="KW-0694">RNA-binding</keyword>
<keyword id="KW-0819">tRNA processing</keyword>
<feature type="chain" id="PRO_0000143315" description="Maturase K">
    <location>
        <begin position="1"/>
        <end position="509"/>
    </location>
</feature>
<accession>Q9TIS6</accession>
<comment type="function">
    <text evidence="1">Usually encoded in the trnK tRNA gene intron. Probably assists in splicing its own and other chloroplast group II introns.</text>
</comment>
<comment type="subcellular location">
    <subcellularLocation>
        <location>Plastid</location>
    </subcellularLocation>
</comment>
<comment type="similarity">
    <text evidence="1">Belongs to the intron maturase 2 family. MatK subfamily.</text>
</comment>
<name>MATK_CASLN</name>
<reference key="1">
    <citation type="journal article" date="1999" name="Ann. Mo. Bot. Gard.">
        <title>The evolution of parasitism in Scrophulariaceae/Orobanchaceae: plastid gene sequences refute an evolutionary transition series.</title>
        <authorList>
            <person name="Young N.D."/>
            <person name="Steiner K.E."/>
            <person name="dePamphilis C.W."/>
        </authorList>
    </citation>
    <scope>NUCLEOTIDE SEQUENCE [GENOMIC DNA]</scope>
</reference>
<gene>
    <name evidence="1" type="primary">matK</name>
</gene>